<feature type="chain" id="PRO_0000293398" description="Small ribosomal subunit protein uS4">
    <location>
        <begin position="1"/>
        <end position="206"/>
    </location>
</feature>
<feature type="domain" description="S4 RNA-binding" evidence="1">
    <location>
        <begin position="96"/>
        <end position="156"/>
    </location>
</feature>
<accession>A1JS02</accession>
<organism>
    <name type="scientific">Yersinia enterocolitica serotype O:8 / biotype 1B (strain NCTC 13174 / 8081)</name>
    <dbReference type="NCBI Taxonomy" id="393305"/>
    <lineage>
        <taxon>Bacteria</taxon>
        <taxon>Pseudomonadati</taxon>
        <taxon>Pseudomonadota</taxon>
        <taxon>Gammaproteobacteria</taxon>
        <taxon>Enterobacterales</taxon>
        <taxon>Yersiniaceae</taxon>
        <taxon>Yersinia</taxon>
    </lineage>
</organism>
<keyword id="KW-0687">Ribonucleoprotein</keyword>
<keyword id="KW-0689">Ribosomal protein</keyword>
<keyword id="KW-0694">RNA-binding</keyword>
<keyword id="KW-0699">rRNA-binding</keyword>
<reference key="1">
    <citation type="journal article" date="2006" name="PLoS Genet.">
        <title>The complete genome sequence and comparative genome analysis of the high pathogenicity Yersinia enterocolitica strain 8081.</title>
        <authorList>
            <person name="Thomson N.R."/>
            <person name="Howard S."/>
            <person name="Wren B.W."/>
            <person name="Holden M.T.G."/>
            <person name="Crossman L."/>
            <person name="Challis G.L."/>
            <person name="Churcher C."/>
            <person name="Mungall K."/>
            <person name="Brooks K."/>
            <person name="Chillingworth T."/>
            <person name="Feltwell T."/>
            <person name="Abdellah Z."/>
            <person name="Hauser H."/>
            <person name="Jagels K."/>
            <person name="Maddison M."/>
            <person name="Moule S."/>
            <person name="Sanders M."/>
            <person name="Whitehead S."/>
            <person name="Quail M.A."/>
            <person name="Dougan G."/>
            <person name="Parkhill J."/>
            <person name="Prentice M.B."/>
        </authorList>
    </citation>
    <scope>NUCLEOTIDE SEQUENCE [LARGE SCALE GENOMIC DNA]</scope>
    <source>
        <strain>NCTC 13174 / 8081</strain>
    </source>
</reference>
<protein>
    <recommendedName>
        <fullName evidence="1">Small ribosomal subunit protein uS4</fullName>
    </recommendedName>
    <alternativeName>
        <fullName evidence="2">30S ribosomal protein S4</fullName>
    </alternativeName>
</protein>
<proteinExistence type="inferred from homology"/>
<sequence>MARYLGPKLKLSRREGTDLFLKSGVRAIDTKCKIEQPPGQHGARKPRLSDYGVQLREKQKVRRIYGVLERQFRNYYKEAARLKGNTGANLLQLLEGRLDNVVYRMGFGATRAESRQLVSHKAIMVNGRVVNIASYQVSPNDVVSIREKAKKQSRVKAALELAEQREKPTWLEVDAVKMEGVFKRIPERTDLSADINEHLIVELYSK</sequence>
<comment type="function">
    <text evidence="1">One of the primary rRNA binding proteins, it binds directly to 16S rRNA where it nucleates assembly of the body of the 30S subunit.</text>
</comment>
<comment type="function">
    <text evidence="1">With S5 and S12 plays an important role in translational accuracy.</text>
</comment>
<comment type="subunit">
    <text evidence="1">Part of the 30S ribosomal subunit. Contacts protein S5. The interaction surface between S4 and S5 is involved in control of translational fidelity.</text>
</comment>
<comment type="similarity">
    <text evidence="1">Belongs to the universal ribosomal protein uS4 family.</text>
</comment>
<evidence type="ECO:0000255" key="1">
    <source>
        <dbReference type="HAMAP-Rule" id="MF_01306"/>
    </source>
</evidence>
<evidence type="ECO:0000305" key="2"/>
<name>RS4_YERE8</name>
<gene>
    <name evidence="1" type="primary">rpsD</name>
    <name type="ordered locus">YE3899</name>
</gene>
<dbReference type="EMBL" id="AM286415">
    <property type="protein sequence ID" value="CAL13918.1"/>
    <property type="molecule type" value="Genomic_DNA"/>
</dbReference>
<dbReference type="RefSeq" id="WP_002218949.1">
    <property type="nucleotide sequence ID" value="NC_008800.1"/>
</dbReference>
<dbReference type="RefSeq" id="YP_001008044.1">
    <property type="nucleotide sequence ID" value="NC_008800.1"/>
</dbReference>
<dbReference type="SMR" id="A1JS02"/>
<dbReference type="GeneID" id="97454255"/>
<dbReference type="KEGG" id="yen:YE3899"/>
<dbReference type="PATRIC" id="fig|393305.7.peg.4149"/>
<dbReference type="eggNOG" id="COG0522">
    <property type="taxonomic scope" value="Bacteria"/>
</dbReference>
<dbReference type="HOGENOM" id="CLU_092403_0_2_6"/>
<dbReference type="OrthoDB" id="9803672at2"/>
<dbReference type="PRO" id="PR:A1JS02"/>
<dbReference type="Proteomes" id="UP000000642">
    <property type="component" value="Chromosome"/>
</dbReference>
<dbReference type="GO" id="GO:0015935">
    <property type="term" value="C:small ribosomal subunit"/>
    <property type="evidence" value="ECO:0007669"/>
    <property type="project" value="InterPro"/>
</dbReference>
<dbReference type="GO" id="GO:0019843">
    <property type="term" value="F:rRNA binding"/>
    <property type="evidence" value="ECO:0007669"/>
    <property type="project" value="UniProtKB-UniRule"/>
</dbReference>
<dbReference type="GO" id="GO:0003735">
    <property type="term" value="F:structural constituent of ribosome"/>
    <property type="evidence" value="ECO:0007669"/>
    <property type="project" value="InterPro"/>
</dbReference>
<dbReference type="GO" id="GO:0042274">
    <property type="term" value="P:ribosomal small subunit biogenesis"/>
    <property type="evidence" value="ECO:0007669"/>
    <property type="project" value="TreeGrafter"/>
</dbReference>
<dbReference type="GO" id="GO:0006412">
    <property type="term" value="P:translation"/>
    <property type="evidence" value="ECO:0007669"/>
    <property type="project" value="UniProtKB-UniRule"/>
</dbReference>
<dbReference type="CDD" id="cd00165">
    <property type="entry name" value="S4"/>
    <property type="match status" value="1"/>
</dbReference>
<dbReference type="FunFam" id="1.10.1050.10:FF:000001">
    <property type="entry name" value="30S ribosomal protein S4"/>
    <property type="match status" value="1"/>
</dbReference>
<dbReference type="FunFam" id="3.10.290.10:FF:000001">
    <property type="entry name" value="30S ribosomal protein S4"/>
    <property type="match status" value="1"/>
</dbReference>
<dbReference type="Gene3D" id="1.10.1050.10">
    <property type="entry name" value="Ribosomal Protein S4 Delta 41, Chain A, domain 1"/>
    <property type="match status" value="1"/>
</dbReference>
<dbReference type="Gene3D" id="3.10.290.10">
    <property type="entry name" value="RNA-binding S4 domain"/>
    <property type="match status" value="1"/>
</dbReference>
<dbReference type="HAMAP" id="MF_01306_B">
    <property type="entry name" value="Ribosomal_uS4_B"/>
    <property type="match status" value="1"/>
</dbReference>
<dbReference type="InterPro" id="IPR022801">
    <property type="entry name" value="Ribosomal_uS4"/>
</dbReference>
<dbReference type="InterPro" id="IPR005709">
    <property type="entry name" value="Ribosomal_uS4_bac-type"/>
</dbReference>
<dbReference type="InterPro" id="IPR018079">
    <property type="entry name" value="Ribosomal_uS4_CS"/>
</dbReference>
<dbReference type="InterPro" id="IPR001912">
    <property type="entry name" value="Ribosomal_uS4_N"/>
</dbReference>
<dbReference type="InterPro" id="IPR002942">
    <property type="entry name" value="S4_RNA-bd"/>
</dbReference>
<dbReference type="InterPro" id="IPR036986">
    <property type="entry name" value="S4_RNA-bd_sf"/>
</dbReference>
<dbReference type="NCBIfam" id="NF003717">
    <property type="entry name" value="PRK05327.1"/>
    <property type="match status" value="1"/>
</dbReference>
<dbReference type="NCBIfam" id="TIGR01017">
    <property type="entry name" value="rpsD_bact"/>
    <property type="match status" value="1"/>
</dbReference>
<dbReference type="PANTHER" id="PTHR11831">
    <property type="entry name" value="30S 40S RIBOSOMAL PROTEIN"/>
    <property type="match status" value="1"/>
</dbReference>
<dbReference type="PANTHER" id="PTHR11831:SF4">
    <property type="entry name" value="SMALL RIBOSOMAL SUBUNIT PROTEIN US4M"/>
    <property type="match status" value="1"/>
</dbReference>
<dbReference type="Pfam" id="PF00163">
    <property type="entry name" value="Ribosomal_S4"/>
    <property type="match status" value="1"/>
</dbReference>
<dbReference type="Pfam" id="PF01479">
    <property type="entry name" value="S4"/>
    <property type="match status" value="1"/>
</dbReference>
<dbReference type="SMART" id="SM01390">
    <property type="entry name" value="Ribosomal_S4"/>
    <property type="match status" value="1"/>
</dbReference>
<dbReference type="SMART" id="SM00363">
    <property type="entry name" value="S4"/>
    <property type="match status" value="1"/>
</dbReference>
<dbReference type="SUPFAM" id="SSF55174">
    <property type="entry name" value="Alpha-L RNA-binding motif"/>
    <property type="match status" value="1"/>
</dbReference>
<dbReference type="PROSITE" id="PS00632">
    <property type="entry name" value="RIBOSOMAL_S4"/>
    <property type="match status" value="1"/>
</dbReference>
<dbReference type="PROSITE" id="PS50889">
    <property type="entry name" value="S4"/>
    <property type="match status" value="1"/>
</dbReference>